<evidence type="ECO:0000255" key="1">
    <source>
        <dbReference type="HAMAP-Rule" id="MF_01315"/>
    </source>
</evidence>
<evidence type="ECO:0000256" key="2">
    <source>
        <dbReference type="SAM" id="MobiDB-lite"/>
    </source>
</evidence>
<evidence type="ECO:0000305" key="3"/>
<gene>
    <name evidence="1" type="primary">rpsM</name>
    <name type="ordered locus">SPA3284</name>
</gene>
<accession>Q5PK07</accession>
<protein>
    <recommendedName>
        <fullName evidence="1">Small ribosomal subunit protein uS13</fullName>
    </recommendedName>
    <alternativeName>
        <fullName evidence="3">30S ribosomal protein S13</fullName>
    </alternativeName>
</protein>
<sequence length="118" mass="13161">MARIAGINIPDQKHAVIALTSIYGVGKTRSKAILAAAGIAENVKISELSEEQIDTLRDEVAKFVVEGDLRREISMSIKRLMDLGCYRGLRHRRGLPVRGQRTKTNARTRKGPRKPIKK</sequence>
<proteinExistence type="inferred from homology"/>
<feature type="chain" id="PRO_0000230562" description="Small ribosomal subunit protein uS13">
    <location>
        <begin position="1"/>
        <end position="118"/>
    </location>
</feature>
<feature type="region of interest" description="Disordered" evidence="2">
    <location>
        <begin position="94"/>
        <end position="118"/>
    </location>
</feature>
<dbReference type="EMBL" id="CP000026">
    <property type="protein sequence ID" value="AAV79100.1"/>
    <property type="molecule type" value="Genomic_DNA"/>
</dbReference>
<dbReference type="RefSeq" id="WP_000090780.1">
    <property type="nucleotide sequence ID" value="NC_006511.1"/>
</dbReference>
<dbReference type="SMR" id="Q5PK07"/>
<dbReference type="GeneID" id="66757753"/>
<dbReference type="KEGG" id="spt:SPA3284"/>
<dbReference type="HOGENOM" id="CLU_103849_1_2_6"/>
<dbReference type="Proteomes" id="UP000008185">
    <property type="component" value="Chromosome"/>
</dbReference>
<dbReference type="GO" id="GO:0005829">
    <property type="term" value="C:cytosol"/>
    <property type="evidence" value="ECO:0007669"/>
    <property type="project" value="TreeGrafter"/>
</dbReference>
<dbReference type="GO" id="GO:0015935">
    <property type="term" value="C:small ribosomal subunit"/>
    <property type="evidence" value="ECO:0007669"/>
    <property type="project" value="TreeGrafter"/>
</dbReference>
<dbReference type="GO" id="GO:0019843">
    <property type="term" value="F:rRNA binding"/>
    <property type="evidence" value="ECO:0007669"/>
    <property type="project" value="UniProtKB-UniRule"/>
</dbReference>
<dbReference type="GO" id="GO:0003735">
    <property type="term" value="F:structural constituent of ribosome"/>
    <property type="evidence" value="ECO:0007669"/>
    <property type="project" value="InterPro"/>
</dbReference>
<dbReference type="GO" id="GO:0000049">
    <property type="term" value="F:tRNA binding"/>
    <property type="evidence" value="ECO:0007669"/>
    <property type="project" value="UniProtKB-UniRule"/>
</dbReference>
<dbReference type="GO" id="GO:0006412">
    <property type="term" value="P:translation"/>
    <property type="evidence" value="ECO:0007669"/>
    <property type="project" value="UniProtKB-UniRule"/>
</dbReference>
<dbReference type="FunFam" id="1.10.8.50:FF:000001">
    <property type="entry name" value="30S ribosomal protein S13"/>
    <property type="match status" value="1"/>
</dbReference>
<dbReference type="FunFam" id="4.10.910.10:FF:000001">
    <property type="entry name" value="30S ribosomal protein S13"/>
    <property type="match status" value="1"/>
</dbReference>
<dbReference type="Gene3D" id="1.10.8.50">
    <property type="match status" value="1"/>
</dbReference>
<dbReference type="Gene3D" id="4.10.910.10">
    <property type="entry name" value="30s ribosomal protein s13, domain 2"/>
    <property type="match status" value="1"/>
</dbReference>
<dbReference type="HAMAP" id="MF_01315">
    <property type="entry name" value="Ribosomal_uS13"/>
    <property type="match status" value="1"/>
</dbReference>
<dbReference type="InterPro" id="IPR027437">
    <property type="entry name" value="Rbsml_uS13_C"/>
</dbReference>
<dbReference type="InterPro" id="IPR001892">
    <property type="entry name" value="Ribosomal_uS13"/>
</dbReference>
<dbReference type="InterPro" id="IPR010979">
    <property type="entry name" value="Ribosomal_uS13-like_H2TH"/>
</dbReference>
<dbReference type="InterPro" id="IPR019980">
    <property type="entry name" value="Ribosomal_uS13_bac-type"/>
</dbReference>
<dbReference type="InterPro" id="IPR018269">
    <property type="entry name" value="Ribosomal_uS13_CS"/>
</dbReference>
<dbReference type="NCBIfam" id="TIGR03631">
    <property type="entry name" value="uS13_bact"/>
    <property type="match status" value="1"/>
</dbReference>
<dbReference type="PANTHER" id="PTHR10871">
    <property type="entry name" value="30S RIBOSOMAL PROTEIN S13/40S RIBOSOMAL PROTEIN S18"/>
    <property type="match status" value="1"/>
</dbReference>
<dbReference type="PANTHER" id="PTHR10871:SF1">
    <property type="entry name" value="SMALL RIBOSOMAL SUBUNIT PROTEIN US13M"/>
    <property type="match status" value="1"/>
</dbReference>
<dbReference type="Pfam" id="PF00416">
    <property type="entry name" value="Ribosomal_S13"/>
    <property type="match status" value="1"/>
</dbReference>
<dbReference type="PIRSF" id="PIRSF002134">
    <property type="entry name" value="Ribosomal_S13"/>
    <property type="match status" value="1"/>
</dbReference>
<dbReference type="SUPFAM" id="SSF46946">
    <property type="entry name" value="S13-like H2TH domain"/>
    <property type="match status" value="1"/>
</dbReference>
<dbReference type="PROSITE" id="PS00646">
    <property type="entry name" value="RIBOSOMAL_S13_1"/>
    <property type="match status" value="1"/>
</dbReference>
<dbReference type="PROSITE" id="PS50159">
    <property type="entry name" value="RIBOSOMAL_S13_2"/>
    <property type="match status" value="1"/>
</dbReference>
<organism>
    <name type="scientific">Salmonella paratyphi A (strain ATCC 9150 / SARB42)</name>
    <dbReference type="NCBI Taxonomy" id="295319"/>
    <lineage>
        <taxon>Bacteria</taxon>
        <taxon>Pseudomonadati</taxon>
        <taxon>Pseudomonadota</taxon>
        <taxon>Gammaproteobacteria</taxon>
        <taxon>Enterobacterales</taxon>
        <taxon>Enterobacteriaceae</taxon>
        <taxon>Salmonella</taxon>
    </lineage>
</organism>
<keyword id="KW-0687">Ribonucleoprotein</keyword>
<keyword id="KW-0689">Ribosomal protein</keyword>
<keyword id="KW-0694">RNA-binding</keyword>
<keyword id="KW-0699">rRNA-binding</keyword>
<keyword id="KW-0820">tRNA-binding</keyword>
<comment type="function">
    <text evidence="1">Located at the top of the head of the 30S subunit, it contacts several helices of the 16S rRNA. In the 70S ribosome it contacts the 23S rRNA (bridge B1a) and protein L5 of the 50S subunit (bridge B1b), connecting the 2 subunits; these bridges are implicated in subunit movement. Contacts the tRNAs in the A and P-sites.</text>
</comment>
<comment type="subunit">
    <text evidence="1">Part of the 30S ribosomal subunit. Forms a loose heterodimer with protein S19. Forms two bridges to the 50S subunit in the 70S ribosome.</text>
</comment>
<comment type="similarity">
    <text evidence="1">Belongs to the universal ribosomal protein uS13 family.</text>
</comment>
<reference key="1">
    <citation type="journal article" date="2004" name="Nat. Genet.">
        <title>Comparison of genome degradation in Paratyphi A and Typhi, human-restricted serovars of Salmonella enterica that cause typhoid.</title>
        <authorList>
            <person name="McClelland M."/>
            <person name="Sanderson K.E."/>
            <person name="Clifton S.W."/>
            <person name="Latreille P."/>
            <person name="Porwollik S."/>
            <person name="Sabo A."/>
            <person name="Meyer R."/>
            <person name="Bieri T."/>
            <person name="Ozersky P."/>
            <person name="McLellan M."/>
            <person name="Harkins C.R."/>
            <person name="Wang C."/>
            <person name="Nguyen C."/>
            <person name="Berghoff A."/>
            <person name="Elliott G."/>
            <person name="Kohlberg S."/>
            <person name="Strong C."/>
            <person name="Du F."/>
            <person name="Carter J."/>
            <person name="Kremizki C."/>
            <person name="Layman D."/>
            <person name="Leonard S."/>
            <person name="Sun H."/>
            <person name="Fulton L."/>
            <person name="Nash W."/>
            <person name="Miner T."/>
            <person name="Minx P."/>
            <person name="Delehaunty K."/>
            <person name="Fronick C."/>
            <person name="Magrini V."/>
            <person name="Nhan M."/>
            <person name="Warren W."/>
            <person name="Florea L."/>
            <person name="Spieth J."/>
            <person name="Wilson R.K."/>
        </authorList>
    </citation>
    <scope>NUCLEOTIDE SEQUENCE [LARGE SCALE GENOMIC DNA]</scope>
    <source>
        <strain>ATCC 9150 / SARB42</strain>
    </source>
</reference>
<name>RS13_SALPA</name>